<protein>
    <recommendedName>
        <fullName evidence="10">Acyl-CoA (8-3)-desaturase</fullName>
        <ecNumber evidence="11">1.14.19.44</ecNumber>
    </recommendedName>
    <alternativeName>
        <fullName>Delta(5) fatty acid desaturase</fullName>
        <shortName evidence="8">D5D</shortName>
        <shortName evidence="8">Delta(5) desaturase</shortName>
        <shortName evidence="2">Delta-5 desaturase</shortName>
    </alternativeName>
    <alternativeName>
        <fullName evidence="9">Fatty acid desaturase 1</fullName>
    </alternativeName>
</protein>
<keyword id="KW-0007">Acetylation</keyword>
<keyword id="KW-0249">Electron transport</keyword>
<keyword id="KW-0256">Endoplasmic reticulum</keyword>
<keyword id="KW-0275">Fatty acid biosynthesis</keyword>
<keyword id="KW-0276">Fatty acid metabolism</keyword>
<keyword id="KW-0444">Lipid biosynthesis</keyword>
<keyword id="KW-0443">Lipid metabolism</keyword>
<keyword id="KW-0472">Membrane</keyword>
<keyword id="KW-0496">Mitochondrion</keyword>
<keyword id="KW-0560">Oxidoreductase</keyword>
<keyword id="KW-1185">Reference proteome</keyword>
<keyword id="KW-0812">Transmembrane</keyword>
<keyword id="KW-1133">Transmembrane helix</keyword>
<keyword id="KW-0813">Transport</keyword>
<sequence length="447" mass="52323">MAPDPVPTPGPASAQLRQTRYFTWEEVAQRSGREKERWLVIDRKVYNISDFSRRHPGGSRVISHYAGQDATDPFVAFHINKGLVRKYMNSLLIGELAPEQPSFEPTKNKALTDEFRELRATVERMGLMKANHLFFLVYLLHILLLDVAAWLTLWIFGTSLVPFILCAVLLSTVQAQAGWLQHDFGHLSVFGTSTWNHLLHHFVIGHLKGAPASWWNHMHFQHHAKPNCFRKDPDINMHPLFFALGKVLPVELGREKKKHMPYNHQHKYFFLIGPPALLPLYFQWYIFYFVVQRKKWVDLAWMLSFYARIFFTYMPLLGLKGFLGLFFIVRFLESNWFVWVTQMNHIPMHIDHDRNVDWVSTQLQATCNVHQSAFNNWFSGHLNFQIEHHLFPTMPRHNYHKVAPLVQSLCAKYGIKYESKPLLTAFADIVYSLKESGQLWLDAYLHQ</sequence>
<feature type="chain" id="PRO_0000307097" description="Acyl-CoA (8-3)-desaturase">
    <location>
        <begin position="1"/>
        <end position="447"/>
    </location>
</feature>
<feature type="topological domain" description="Cytoplasmic" evidence="4">
    <location>
        <begin position="1"/>
        <end position="124"/>
    </location>
</feature>
<feature type="transmembrane region" description="Helical" evidence="4">
    <location>
        <begin position="125"/>
        <end position="145"/>
    </location>
</feature>
<feature type="topological domain" description="Lumenal" evidence="4">
    <location>
        <begin position="146"/>
        <end position="160"/>
    </location>
</feature>
<feature type="transmembrane region" description="Helical" evidence="4">
    <location>
        <begin position="161"/>
        <end position="180"/>
    </location>
</feature>
<feature type="topological domain" description="Cytoplasmic" evidence="4">
    <location>
        <begin position="181"/>
        <end position="268"/>
    </location>
</feature>
<feature type="transmembrane region" description="Helical" evidence="4">
    <location>
        <begin position="269"/>
        <end position="289"/>
    </location>
</feature>
<feature type="topological domain" description="Lumenal" evidence="4">
    <location>
        <begin position="290"/>
        <end position="308"/>
    </location>
</feature>
<feature type="transmembrane region" description="Helical" evidence="4">
    <location>
        <begin position="309"/>
        <end position="329"/>
    </location>
</feature>
<feature type="topological domain" description="Cytoplasmic" evidence="4">
    <location>
        <begin position="330"/>
        <end position="447"/>
    </location>
</feature>
<feature type="domain" description="Cytochrome b5 heme-binding" evidence="5">
    <location>
        <begin position="19"/>
        <end position="97"/>
    </location>
</feature>
<feature type="short sequence motif" description="Histidine box-1">
    <location>
        <begin position="182"/>
        <end position="186"/>
    </location>
</feature>
<feature type="short sequence motif" description="Histidine box-2">
    <location>
        <begin position="219"/>
        <end position="223"/>
    </location>
</feature>
<feature type="short sequence motif" description="Histidine box-3">
    <location>
        <begin position="385"/>
        <end position="389"/>
    </location>
</feature>
<feature type="modified residue" description="N-acetylmethionine" evidence="2">
    <location>
        <position position="1"/>
    </location>
</feature>
<feature type="sequence conflict" description="In Ref. 2; BAE32539." evidence="10" ref="2">
    <original>G</original>
    <variation>W</variation>
    <location>
        <position position="32"/>
    </location>
</feature>
<feature type="sequence conflict" description="In Ref. 3; AAH26848." evidence="10" ref="3">
    <original>V</original>
    <variation>L</variation>
    <location>
        <position position="297"/>
    </location>
</feature>
<feature type="sequence conflict" description="In Ref. 3; AAH26848/AAH22139/AAH26831." evidence="10" ref="3">
    <original>V</original>
    <variation>I</variation>
    <location>
        <position position="369"/>
    </location>
</feature>
<organism>
    <name type="scientific">Mus musculus</name>
    <name type="common">Mouse</name>
    <dbReference type="NCBI Taxonomy" id="10090"/>
    <lineage>
        <taxon>Eukaryota</taxon>
        <taxon>Metazoa</taxon>
        <taxon>Chordata</taxon>
        <taxon>Craniata</taxon>
        <taxon>Vertebrata</taxon>
        <taxon>Euteleostomi</taxon>
        <taxon>Mammalia</taxon>
        <taxon>Eutheria</taxon>
        <taxon>Euarchontoglires</taxon>
        <taxon>Glires</taxon>
        <taxon>Rodentia</taxon>
        <taxon>Myomorpha</taxon>
        <taxon>Muroidea</taxon>
        <taxon>Muridae</taxon>
        <taxon>Murinae</taxon>
        <taxon>Mus</taxon>
        <taxon>Mus</taxon>
    </lineage>
</organism>
<gene>
    <name evidence="9 12" type="primary">Fads1</name>
</gene>
<dbReference type="EC" id="1.14.19.44" evidence="11"/>
<dbReference type="EMBL" id="AB072976">
    <property type="protein sequence ID" value="BAB69894.1"/>
    <property type="molecule type" value="mRNA"/>
</dbReference>
<dbReference type="EMBL" id="AK033308">
    <property type="protein sequence ID" value="BAC28228.1"/>
    <property type="molecule type" value="mRNA"/>
</dbReference>
<dbReference type="EMBL" id="AK083959">
    <property type="protein sequence ID" value="BAC39079.1"/>
    <property type="molecule type" value="mRNA"/>
</dbReference>
<dbReference type="EMBL" id="AK154367">
    <property type="protein sequence ID" value="BAE32539.1"/>
    <property type="molecule type" value="mRNA"/>
</dbReference>
<dbReference type="EMBL" id="BC022139">
    <property type="protein sequence ID" value="AAH22139.1"/>
    <property type="molecule type" value="mRNA"/>
</dbReference>
<dbReference type="EMBL" id="BC026831">
    <property type="protein sequence ID" value="AAH26831.1"/>
    <property type="molecule type" value="mRNA"/>
</dbReference>
<dbReference type="EMBL" id="BC026848">
    <property type="protein sequence ID" value="AAH26848.1"/>
    <property type="molecule type" value="mRNA"/>
</dbReference>
<dbReference type="EMBL" id="BC063053">
    <property type="protein sequence ID" value="AAH63053.1"/>
    <property type="molecule type" value="mRNA"/>
</dbReference>
<dbReference type="CCDS" id="CCDS29572.1"/>
<dbReference type="RefSeq" id="NP_666206.1">
    <property type="nucleotide sequence ID" value="NM_146094.2"/>
</dbReference>
<dbReference type="SMR" id="Q920L1"/>
<dbReference type="BioGRID" id="218056">
    <property type="interactions" value="6"/>
</dbReference>
<dbReference type="FunCoup" id="Q920L1">
    <property type="interactions" value="2162"/>
</dbReference>
<dbReference type="IntAct" id="Q920L1">
    <property type="interactions" value="1"/>
</dbReference>
<dbReference type="STRING" id="10090.ENSMUSP00000010807"/>
<dbReference type="BindingDB" id="Q920L1"/>
<dbReference type="ChEMBL" id="CHEMBL5725"/>
<dbReference type="GlyGen" id="Q920L1">
    <property type="glycosylation" value="3 sites, 1 N-linked glycan (1 site), 1 O-linked glycan (1 site)"/>
</dbReference>
<dbReference type="iPTMnet" id="Q920L1"/>
<dbReference type="PhosphoSitePlus" id="Q920L1"/>
<dbReference type="SwissPalm" id="Q920L1"/>
<dbReference type="jPOST" id="Q920L1"/>
<dbReference type="PaxDb" id="10090-ENSMUSP00000010807"/>
<dbReference type="PeptideAtlas" id="Q920L1"/>
<dbReference type="ProteomicsDB" id="277035"/>
<dbReference type="Pumba" id="Q920L1"/>
<dbReference type="Antibodypedia" id="21596">
    <property type="antibodies" value="277 antibodies from 36 providers"/>
</dbReference>
<dbReference type="DNASU" id="76267"/>
<dbReference type="Ensembl" id="ENSMUST00000010807.6">
    <property type="protein sequence ID" value="ENSMUSP00000010807.5"/>
    <property type="gene ID" value="ENSMUSG00000010663.6"/>
</dbReference>
<dbReference type="GeneID" id="76267"/>
<dbReference type="KEGG" id="mmu:76267"/>
<dbReference type="UCSC" id="uc008gpd.2">
    <property type="organism name" value="mouse"/>
</dbReference>
<dbReference type="AGR" id="MGI:1923517"/>
<dbReference type="CTD" id="3992"/>
<dbReference type="MGI" id="MGI:1923517">
    <property type="gene designation" value="Fads1"/>
</dbReference>
<dbReference type="VEuPathDB" id="HostDB:ENSMUSG00000010663"/>
<dbReference type="eggNOG" id="KOG4232">
    <property type="taxonomic scope" value="Eukaryota"/>
</dbReference>
<dbReference type="GeneTree" id="ENSGT00950000182990"/>
<dbReference type="HOGENOM" id="CLU_016265_0_1_1"/>
<dbReference type="InParanoid" id="Q920L1"/>
<dbReference type="OMA" id="LYNCNYF"/>
<dbReference type="OrthoDB" id="260091at2759"/>
<dbReference type="PhylomeDB" id="Q920L1"/>
<dbReference type="TreeFam" id="TF313604"/>
<dbReference type="BRENDA" id="1.14.19.30">
    <property type="organism ID" value="3474"/>
</dbReference>
<dbReference type="Reactome" id="R-MMU-2046105">
    <property type="pathway name" value="Linoleic acid (LA) metabolism"/>
</dbReference>
<dbReference type="Reactome" id="R-MMU-2046106">
    <property type="pathway name" value="alpha-linolenic acid (ALA) metabolism"/>
</dbReference>
<dbReference type="UniPathway" id="UPA00658"/>
<dbReference type="BioGRID-ORCS" id="76267">
    <property type="hits" value="2 hits in 80 CRISPR screens"/>
</dbReference>
<dbReference type="ChiTaRS" id="Fads1">
    <property type="organism name" value="mouse"/>
</dbReference>
<dbReference type="PRO" id="PR:Q920L1"/>
<dbReference type="Proteomes" id="UP000000589">
    <property type="component" value="Chromosome 19"/>
</dbReference>
<dbReference type="RNAct" id="Q920L1">
    <property type="molecule type" value="protein"/>
</dbReference>
<dbReference type="Bgee" id="ENSMUSG00000010663">
    <property type="expression patterns" value="Expressed in adrenal gland and 257 other cell types or tissues"/>
</dbReference>
<dbReference type="ExpressionAtlas" id="Q920L1">
    <property type="expression patterns" value="baseline and differential"/>
</dbReference>
<dbReference type="GO" id="GO:0005789">
    <property type="term" value="C:endoplasmic reticulum membrane"/>
    <property type="evidence" value="ECO:0000314"/>
    <property type="project" value="MGI"/>
</dbReference>
<dbReference type="GO" id="GO:0005739">
    <property type="term" value="C:mitochondrion"/>
    <property type="evidence" value="ECO:0000250"/>
    <property type="project" value="UniProtKB"/>
</dbReference>
<dbReference type="GO" id="GO:0062076">
    <property type="term" value="F:acyl-CoA (8-3)-desaturase activity"/>
    <property type="evidence" value="ECO:0000315"/>
    <property type="project" value="UniProtKB"/>
</dbReference>
<dbReference type="GO" id="GO:0016213">
    <property type="term" value="F:acyl-CoA 6-desaturase activity"/>
    <property type="evidence" value="ECO:0000266"/>
    <property type="project" value="MGI"/>
</dbReference>
<dbReference type="GO" id="GO:0045485">
    <property type="term" value="F:omega-6 fatty acid desaturase activity"/>
    <property type="evidence" value="ECO:0000315"/>
    <property type="project" value="MGI"/>
</dbReference>
<dbReference type="GO" id="GO:0036109">
    <property type="term" value="P:alpha-linolenic acid metabolic process"/>
    <property type="evidence" value="ECO:0000315"/>
    <property type="project" value="MGI"/>
</dbReference>
<dbReference type="GO" id="GO:0006633">
    <property type="term" value="P:fatty acid biosynthetic process"/>
    <property type="evidence" value="ECO:0000315"/>
    <property type="project" value="MGI"/>
</dbReference>
<dbReference type="GO" id="GO:1901570">
    <property type="term" value="P:fatty acid derivative biosynthetic process"/>
    <property type="evidence" value="ECO:0000315"/>
    <property type="project" value="MGI"/>
</dbReference>
<dbReference type="GO" id="GO:0043651">
    <property type="term" value="P:linoleic acid metabolic process"/>
    <property type="evidence" value="ECO:0000315"/>
    <property type="project" value="MGI"/>
</dbReference>
<dbReference type="GO" id="GO:0042759">
    <property type="term" value="P:long-chain fatty acid biosynthetic process"/>
    <property type="evidence" value="ECO:0000315"/>
    <property type="project" value="MGI"/>
</dbReference>
<dbReference type="GO" id="GO:0006636">
    <property type="term" value="P:unsaturated fatty acid biosynthetic process"/>
    <property type="evidence" value="ECO:0000315"/>
    <property type="project" value="MGI"/>
</dbReference>
<dbReference type="CDD" id="cd03506">
    <property type="entry name" value="Delta6-FADS-like"/>
    <property type="match status" value="1"/>
</dbReference>
<dbReference type="FunFam" id="3.10.120.10:FF:000017">
    <property type="entry name" value="Fatty acid desaturase 1"/>
    <property type="match status" value="1"/>
</dbReference>
<dbReference type="Gene3D" id="3.10.120.10">
    <property type="entry name" value="Cytochrome b5-like heme/steroid binding domain"/>
    <property type="match status" value="1"/>
</dbReference>
<dbReference type="InterPro" id="IPR001199">
    <property type="entry name" value="Cyt_B5-like_heme/steroid-bd"/>
</dbReference>
<dbReference type="InterPro" id="IPR036400">
    <property type="entry name" value="Cyt_B5-like_heme/steroid_sf"/>
</dbReference>
<dbReference type="InterPro" id="IPR005804">
    <property type="entry name" value="FA_desaturase_dom"/>
</dbReference>
<dbReference type="InterPro" id="IPR012171">
    <property type="entry name" value="Fatty_acid_desaturase"/>
</dbReference>
<dbReference type="PANTHER" id="PTHR19353:SF57">
    <property type="entry name" value="ACYL-COA (8-3)-DESATURASE"/>
    <property type="match status" value="1"/>
</dbReference>
<dbReference type="PANTHER" id="PTHR19353">
    <property type="entry name" value="FATTY ACID DESATURASE 2"/>
    <property type="match status" value="1"/>
</dbReference>
<dbReference type="Pfam" id="PF00173">
    <property type="entry name" value="Cyt-b5"/>
    <property type="match status" value="1"/>
</dbReference>
<dbReference type="Pfam" id="PF00487">
    <property type="entry name" value="FA_desaturase"/>
    <property type="match status" value="1"/>
</dbReference>
<dbReference type="PIRSF" id="PIRSF015921">
    <property type="entry name" value="FA_sphinglp_des"/>
    <property type="match status" value="1"/>
</dbReference>
<dbReference type="PRINTS" id="PR00363">
    <property type="entry name" value="CYTOCHROMEB5"/>
</dbReference>
<dbReference type="SMART" id="SM01117">
    <property type="entry name" value="Cyt-b5"/>
    <property type="match status" value="1"/>
</dbReference>
<dbReference type="SUPFAM" id="SSF55856">
    <property type="entry name" value="Cytochrome b5-like heme/steroid binding domain"/>
    <property type="match status" value="1"/>
</dbReference>
<dbReference type="PROSITE" id="PS50255">
    <property type="entry name" value="CYTOCHROME_B5_2"/>
    <property type="match status" value="1"/>
</dbReference>
<proteinExistence type="evidence at protein level"/>
<accession>Q920L1</accession>
<accession>Q3U494</accession>
<accession>Q8BZX7</accession>
<accession>Q8R0G8</accession>
<accession>Q8VC07</accession>
<name>FADS1_MOUSE</name>
<reference key="1">
    <citation type="journal article" date="2002" name="J. Lipid Res.">
        <title>Dual regulation of mouse Delta(5)- and Delta(6)-desaturase gene expression by SREBP-1 and PPARalpha.</title>
        <authorList>
            <person name="Matsuzaka T."/>
            <person name="Shimano H."/>
            <person name="Yahagi N."/>
            <person name="Amemiya-Kudo M."/>
            <person name="Yoshikawa T."/>
            <person name="Hasty A.H."/>
            <person name="Tamura Y."/>
            <person name="Osuga J."/>
            <person name="Okazaki H."/>
            <person name="Iizuka Y."/>
            <person name="Takahashi A."/>
            <person name="Sone H."/>
            <person name="Gotoda T."/>
            <person name="Ishibashi S."/>
            <person name="Yamada N."/>
        </authorList>
    </citation>
    <scope>NUCLEOTIDE SEQUENCE [MRNA]</scope>
    <scope>TISSUE SPECIFICITY</scope>
    <scope>INDUCTION</scope>
    <source>
        <strain>C57BL/6J</strain>
        <tissue>Liver</tissue>
    </source>
</reference>
<reference key="2">
    <citation type="journal article" date="2005" name="Science">
        <title>The transcriptional landscape of the mammalian genome.</title>
        <authorList>
            <person name="Carninci P."/>
            <person name="Kasukawa T."/>
            <person name="Katayama S."/>
            <person name="Gough J."/>
            <person name="Frith M.C."/>
            <person name="Maeda N."/>
            <person name="Oyama R."/>
            <person name="Ravasi T."/>
            <person name="Lenhard B."/>
            <person name="Wells C."/>
            <person name="Kodzius R."/>
            <person name="Shimokawa K."/>
            <person name="Bajic V.B."/>
            <person name="Brenner S.E."/>
            <person name="Batalov S."/>
            <person name="Forrest A.R."/>
            <person name="Zavolan M."/>
            <person name="Davis M.J."/>
            <person name="Wilming L.G."/>
            <person name="Aidinis V."/>
            <person name="Allen J.E."/>
            <person name="Ambesi-Impiombato A."/>
            <person name="Apweiler R."/>
            <person name="Aturaliya R.N."/>
            <person name="Bailey T.L."/>
            <person name="Bansal M."/>
            <person name="Baxter L."/>
            <person name="Beisel K.W."/>
            <person name="Bersano T."/>
            <person name="Bono H."/>
            <person name="Chalk A.M."/>
            <person name="Chiu K.P."/>
            <person name="Choudhary V."/>
            <person name="Christoffels A."/>
            <person name="Clutterbuck D.R."/>
            <person name="Crowe M.L."/>
            <person name="Dalla E."/>
            <person name="Dalrymple B.P."/>
            <person name="de Bono B."/>
            <person name="Della Gatta G."/>
            <person name="di Bernardo D."/>
            <person name="Down T."/>
            <person name="Engstrom P."/>
            <person name="Fagiolini M."/>
            <person name="Faulkner G."/>
            <person name="Fletcher C.F."/>
            <person name="Fukushima T."/>
            <person name="Furuno M."/>
            <person name="Futaki S."/>
            <person name="Gariboldi M."/>
            <person name="Georgii-Hemming P."/>
            <person name="Gingeras T.R."/>
            <person name="Gojobori T."/>
            <person name="Green R.E."/>
            <person name="Gustincich S."/>
            <person name="Harbers M."/>
            <person name="Hayashi Y."/>
            <person name="Hensch T.K."/>
            <person name="Hirokawa N."/>
            <person name="Hill D."/>
            <person name="Huminiecki L."/>
            <person name="Iacono M."/>
            <person name="Ikeo K."/>
            <person name="Iwama A."/>
            <person name="Ishikawa T."/>
            <person name="Jakt M."/>
            <person name="Kanapin A."/>
            <person name="Katoh M."/>
            <person name="Kawasawa Y."/>
            <person name="Kelso J."/>
            <person name="Kitamura H."/>
            <person name="Kitano H."/>
            <person name="Kollias G."/>
            <person name="Krishnan S.P."/>
            <person name="Kruger A."/>
            <person name="Kummerfeld S.K."/>
            <person name="Kurochkin I.V."/>
            <person name="Lareau L.F."/>
            <person name="Lazarevic D."/>
            <person name="Lipovich L."/>
            <person name="Liu J."/>
            <person name="Liuni S."/>
            <person name="McWilliam S."/>
            <person name="Madan Babu M."/>
            <person name="Madera M."/>
            <person name="Marchionni L."/>
            <person name="Matsuda H."/>
            <person name="Matsuzawa S."/>
            <person name="Miki H."/>
            <person name="Mignone F."/>
            <person name="Miyake S."/>
            <person name="Morris K."/>
            <person name="Mottagui-Tabar S."/>
            <person name="Mulder N."/>
            <person name="Nakano N."/>
            <person name="Nakauchi H."/>
            <person name="Ng P."/>
            <person name="Nilsson R."/>
            <person name="Nishiguchi S."/>
            <person name="Nishikawa S."/>
            <person name="Nori F."/>
            <person name="Ohara O."/>
            <person name="Okazaki Y."/>
            <person name="Orlando V."/>
            <person name="Pang K.C."/>
            <person name="Pavan W.J."/>
            <person name="Pavesi G."/>
            <person name="Pesole G."/>
            <person name="Petrovsky N."/>
            <person name="Piazza S."/>
            <person name="Reed J."/>
            <person name="Reid J.F."/>
            <person name="Ring B.Z."/>
            <person name="Ringwald M."/>
            <person name="Rost B."/>
            <person name="Ruan Y."/>
            <person name="Salzberg S.L."/>
            <person name="Sandelin A."/>
            <person name="Schneider C."/>
            <person name="Schoenbach C."/>
            <person name="Sekiguchi K."/>
            <person name="Semple C.A."/>
            <person name="Seno S."/>
            <person name="Sessa L."/>
            <person name="Sheng Y."/>
            <person name="Shibata Y."/>
            <person name="Shimada H."/>
            <person name="Shimada K."/>
            <person name="Silva D."/>
            <person name="Sinclair B."/>
            <person name="Sperling S."/>
            <person name="Stupka E."/>
            <person name="Sugiura K."/>
            <person name="Sultana R."/>
            <person name="Takenaka Y."/>
            <person name="Taki K."/>
            <person name="Tammoja K."/>
            <person name="Tan S.L."/>
            <person name="Tang S."/>
            <person name="Taylor M.S."/>
            <person name="Tegner J."/>
            <person name="Teichmann S.A."/>
            <person name="Ueda H.R."/>
            <person name="van Nimwegen E."/>
            <person name="Verardo R."/>
            <person name="Wei C.L."/>
            <person name="Yagi K."/>
            <person name="Yamanishi H."/>
            <person name="Zabarovsky E."/>
            <person name="Zhu S."/>
            <person name="Zimmer A."/>
            <person name="Hide W."/>
            <person name="Bult C."/>
            <person name="Grimmond S.M."/>
            <person name="Teasdale R.D."/>
            <person name="Liu E.T."/>
            <person name="Brusic V."/>
            <person name="Quackenbush J."/>
            <person name="Wahlestedt C."/>
            <person name="Mattick J.S."/>
            <person name="Hume D.A."/>
            <person name="Kai C."/>
            <person name="Sasaki D."/>
            <person name="Tomaru Y."/>
            <person name="Fukuda S."/>
            <person name="Kanamori-Katayama M."/>
            <person name="Suzuki M."/>
            <person name="Aoki J."/>
            <person name="Arakawa T."/>
            <person name="Iida J."/>
            <person name="Imamura K."/>
            <person name="Itoh M."/>
            <person name="Kato T."/>
            <person name="Kawaji H."/>
            <person name="Kawagashira N."/>
            <person name="Kawashima T."/>
            <person name="Kojima M."/>
            <person name="Kondo S."/>
            <person name="Konno H."/>
            <person name="Nakano K."/>
            <person name="Ninomiya N."/>
            <person name="Nishio T."/>
            <person name="Okada M."/>
            <person name="Plessy C."/>
            <person name="Shibata K."/>
            <person name="Shiraki T."/>
            <person name="Suzuki S."/>
            <person name="Tagami M."/>
            <person name="Waki K."/>
            <person name="Watahiki A."/>
            <person name="Okamura-Oho Y."/>
            <person name="Suzuki H."/>
            <person name="Kawai J."/>
            <person name="Hayashizaki Y."/>
        </authorList>
    </citation>
    <scope>NUCLEOTIDE SEQUENCE [LARGE SCALE MRNA]</scope>
    <source>
        <strain>C57BL/6J</strain>
        <strain>NOD</strain>
        <tissue>Spinal ganglion</tissue>
        <tissue>Testis</tissue>
    </source>
</reference>
<reference key="3">
    <citation type="journal article" date="2004" name="Genome Res.">
        <title>The status, quality, and expansion of the NIH full-length cDNA project: the Mammalian Gene Collection (MGC).</title>
        <authorList>
            <consortium name="The MGC Project Team"/>
        </authorList>
    </citation>
    <scope>NUCLEOTIDE SEQUENCE [LARGE SCALE MRNA]</scope>
    <source>
        <strain>C57BL/6J</strain>
        <strain>FVB/N</strain>
        <tissue>Brain</tissue>
        <tissue>Kidney</tissue>
        <tissue>Liver</tissue>
    </source>
</reference>
<reference key="4">
    <citation type="journal article" date="2010" name="Cell">
        <title>A tissue-specific atlas of mouse protein phosphorylation and expression.</title>
        <authorList>
            <person name="Huttlin E.L."/>
            <person name="Jedrychowski M.P."/>
            <person name="Elias J.E."/>
            <person name="Goswami T."/>
            <person name="Rad R."/>
            <person name="Beausoleil S.A."/>
            <person name="Villen J."/>
            <person name="Haas W."/>
            <person name="Sowa M.E."/>
            <person name="Gygi S.P."/>
        </authorList>
    </citation>
    <scope>IDENTIFICATION BY MASS SPECTROMETRY [LARGE SCALE ANALYSIS]</scope>
    <source>
        <tissue>Liver</tissue>
        <tissue>Testis</tissue>
    </source>
</reference>
<reference key="5">
    <citation type="journal article" date="2012" name="J. Lipid Res.">
        <title>Characterization of an arachidonic acid-deficient (Fads1 knockout) mouse model.</title>
        <authorList>
            <person name="Fan Y.Y."/>
            <person name="Monk J.M."/>
            <person name="Hou T.Y."/>
            <person name="Callway E."/>
            <person name="Vincent L."/>
            <person name="Weeks B."/>
            <person name="Yang P."/>
            <person name="Chapkin R.S."/>
        </authorList>
    </citation>
    <scope>FUNCTION</scope>
    <scope>DISRUPTION PHENOTYPE</scope>
    <scope>TISSUE SPECIFICITY</scope>
    <scope>CATALYTIC ACTIVITY</scope>
</reference>
<evidence type="ECO:0000250" key="1">
    <source>
        <dbReference type="UniProtKB" id="A4UVI1"/>
    </source>
</evidence>
<evidence type="ECO:0000250" key="2">
    <source>
        <dbReference type="UniProtKB" id="O60427"/>
    </source>
</evidence>
<evidence type="ECO:0000250" key="3">
    <source>
        <dbReference type="UniProtKB" id="Q920R3"/>
    </source>
</evidence>
<evidence type="ECO:0000255" key="4"/>
<evidence type="ECO:0000255" key="5">
    <source>
        <dbReference type="PROSITE-ProRule" id="PRU00279"/>
    </source>
</evidence>
<evidence type="ECO:0000269" key="6">
    <source>
    </source>
</evidence>
<evidence type="ECO:0000269" key="7">
    <source>
    </source>
</evidence>
<evidence type="ECO:0000303" key="8">
    <source>
    </source>
</evidence>
<evidence type="ECO:0000303" key="9">
    <source>
    </source>
</evidence>
<evidence type="ECO:0000305" key="10"/>
<evidence type="ECO:0000305" key="11">
    <source>
    </source>
</evidence>
<evidence type="ECO:0000312" key="12">
    <source>
        <dbReference type="MGI" id="MGI:1923517"/>
    </source>
</evidence>
<comment type="function">
    <text evidence="3 7 11">Acts as a front-end fatty acyl-coenzyme A (CoA) desaturase that introduces a cis double bond at carbon 5 located between a preexisting double bond and the carboxyl end of the fatty acyl chain. Involved in biosynthesis of highly unsaturated fatty acids (HUFA) from the essential polyunsaturated fatty acids (PUFA) linoleic acid (LA) (18:2n-6) and alpha-linolenic acid (ALA) (18:3n-3) precursors. Specifically, desaturates dihomo-gamma-linoleoate (DGLA) (20:3n-6) and eicosatetraenoate (ETA) (20:4n-3) to generate arachidonate (AA) (20:4n-6) and eicosapentaenoate (EPA) (20:5n-3), respectively (Probable). As a rate limiting enzyme for DGLA (20:3n-6) and AA (20:4n-6)-derived eicosanoid biosynthesis, controls the metabolism of inflammatory lipids like prostaglandin E2, critical for efficient acute inflammatory response and maintenance of epithelium homeostasis. Contributes to membrane phospholipid biosynthesis by providing AA (20:4n-6) as a major acyl chain esterified into phospholipids. In particular, regulates phosphatidylinositol-4,5-bisphosphate levels, modulating inflammatory cytokine production in T-cells (PubMed:22534642). Also desaturates (11E)-octadecenoate (trans-vaccenoate)(18:1n-9), a metabolite in the biohydrogenation pathway of LA (18:2n-6) (By similarity).</text>
</comment>
<comment type="catalytic activity">
    <reaction evidence="11">
        <text>(8Z,11Z,14Z)-eicosatrienoyl-CoA + 2 Fe(II)-[cytochrome b5] + O2 + 2 H(+) = (5Z,8Z,11Z,14Z)-eicosatetraenoyl-CoA + 2 Fe(III)-[cytochrome b5] + 2 H2O</text>
        <dbReference type="Rhea" id="RHEA:46424"/>
        <dbReference type="Rhea" id="RHEA-COMP:10438"/>
        <dbReference type="Rhea" id="RHEA-COMP:10439"/>
        <dbReference type="ChEBI" id="CHEBI:15377"/>
        <dbReference type="ChEBI" id="CHEBI:15378"/>
        <dbReference type="ChEBI" id="CHEBI:15379"/>
        <dbReference type="ChEBI" id="CHEBI:29033"/>
        <dbReference type="ChEBI" id="CHEBI:29034"/>
        <dbReference type="ChEBI" id="CHEBI:57368"/>
        <dbReference type="ChEBI" id="CHEBI:74264"/>
        <dbReference type="EC" id="1.14.19.44"/>
    </reaction>
    <physiologicalReaction direction="left-to-right" evidence="11">
        <dbReference type="Rhea" id="RHEA:46425"/>
    </physiologicalReaction>
</comment>
<comment type="catalytic activity">
    <reaction evidence="2">
        <text>(8Z,11Z,14Z,17Z)-eicosatetraenoyl-CoA + 2 Fe(II)-[cytochrome b5] + O2 + 2 H(+) = (5Z,8Z,11Z,14Z,17Z)-eicosapentaenoyl-CoA + 2 Fe(III)-[cytochrome b5] + 2 H2O</text>
        <dbReference type="Rhea" id="RHEA:46420"/>
        <dbReference type="Rhea" id="RHEA-COMP:10438"/>
        <dbReference type="Rhea" id="RHEA-COMP:10439"/>
        <dbReference type="ChEBI" id="CHEBI:15377"/>
        <dbReference type="ChEBI" id="CHEBI:15378"/>
        <dbReference type="ChEBI" id="CHEBI:15379"/>
        <dbReference type="ChEBI" id="CHEBI:29033"/>
        <dbReference type="ChEBI" id="CHEBI:29034"/>
        <dbReference type="ChEBI" id="CHEBI:73862"/>
        <dbReference type="ChEBI" id="CHEBI:74265"/>
        <dbReference type="EC" id="1.14.19.44"/>
    </reaction>
    <physiologicalReaction direction="left-to-right" evidence="2">
        <dbReference type="Rhea" id="RHEA:46421"/>
    </physiologicalReaction>
</comment>
<comment type="catalytic activity">
    <reaction evidence="3">
        <text>(11E)-octadecenoyl-CoA + 2 Fe(II)-[cytochrome b5] + O2 + 2 H(+) = (5Z,11E)-octadecadienoyl-CoA + 2 Fe(III)-[cytochrome b5] + 2 H2O</text>
        <dbReference type="Rhea" id="RHEA:46060"/>
        <dbReference type="Rhea" id="RHEA-COMP:10438"/>
        <dbReference type="Rhea" id="RHEA-COMP:10439"/>
        <dbReference type="ChEBI" id="CHEBI:15377"/>
        <dbReference type="ChEBI" id="CHEBI:15378"/>
        <dbReference type="ChEBI" id="CHEBI:15379"/>
        <dbReference type="ChEBI" id="CHEBI:29033"/>
        <dbReference type="ChEBI" id="CHEBI:29034"/>
        <dbReference type="ChEBI" id="CHEBI:74296"/>
        <dbReference type="ChEBI" id="CHEBI:85651"/>
    </reaction>
    <physiologicalReaction direction="left-to-right" evidence="3">
        <dbReference type="Rhea" id="RHEA:46061"/>
    </physiologicalReaction>
</comment>
<comment type="pathway">
    <text>Lipid metabolism; polyunsaturated fatty acid biosynthesis.</text>
</comment>
<comment type="subcellular location">
    <subcellularLocation>
        <location evidence="1">Endoplasmic reticulum membrane</location>
        <topology evidence="1">Multi-pass membrane protein</topology>
    </subcellularLocation>
    <subcellularLocation>
        <location evidence="2">Mitochondrion</location>
    </subcellularLocation>
</comment>
<comment type="tissue specificity">
    <text evidence="6 7">Highly expressed in the adrenal gland, liver, brain, and testis, tissues where lipogenesis and steroidogenesis are active (PubMed:11792729). Expressed in colonic mucosa (PubMed:22534642).</text>
</comment>
<comment type="induction">
    <text evidence="6">Expression in liver is down-regulated by dietary PUFA.</text>
</comment>
<comment type="domain">
    <text>The histidine box domains may contain the active site and/or be involved in metal ion binding.</text>
</comment>
<comment type="disruption phenotype">
    <text evidence="7">Knockout mice die prematurely with no survivors past 12 weeks of age. This phenotype can be rescued by adding arachidonic acid (AA) to the diet.</text>
</comment>
<comment type="similarity">
    <text evidence="10">Belongs to the fatty acid desaturase type 1 family.</text>
</comment>